<gene>
    <name type="ORF">MCYG_06503</name>
</gene>
<reference key="1">
    <citation type="journal article" date="2012" name="MBio">
        <title>Comparative genome analysis of Trichophyton rubrum and related dermatophytes reveals candidate genes involved in infection.</title>
        <authorList>
            <person name="Martinez D.A."/>
            <person name="Oliver B.G."/>
            <person name="Graeser Y."/>
            <person name="Goldberg J.M."/>
            <person name="Li W."/>
            <person name="Martinez-Rossi N.M."/>
            <person name="Monod M."/>
            <person name="Shelest E."/>
            <person name="Barton R.C."/>
            <person name="Birch E."/>
            <person name="Brakhage A.A."/>
            <person name="Chen Z."/>
            <person name="Gurr S.J."/>
            <person name="Heiman D."/>
            <person name="Heitman J."/>
            <person name="Kosti I."/>
            <person name="Rossi A."/>
            <person name="Saif S."/>
            <person name="Samalova M."/>
            <person name="Saunders C.W."/>
            <person name="Shea T."/>
            <person name="Summerbell R.C."/>
            <person name="Xu J."/>
            <person name="Young S."/>
            <person name="Zeng Q."/>
            <person name="Birren B.W."/>
            <person name="Cuomo C.A."/>
            <person name="White T.C."/>
        </authorList>
    </citation>
    <scope>NUCLEOTIDE SEQUENCE [LARGE SCALE GENOMIC DNA]</scope>
    <source>
        <strain>ATCC MYA-4605 / CBS 113480</strain>
    </source>
</reference>
<keyword id="KW-0031">Aminopeptidase</keyword>
<keyword id="KW-0378">Hydrolase</keyword>
<keyword id="KW-0464">Manganese</keyword>
<keyword id="KW-0479">Metal-binding</keyword>
<keyword id="KW-0482">Metalloprotease</keyword>
<keyword id="KW-0645">Protease</keyword>
<keyword id="KW-1185">Reference proteome</keyword>
<protein>
    <recommendedName>
        <fullName>Probable Xaa-Pro aminopeptidase MCYG_06503</fullName>
        <ecNumber>3.4.11.9</ecNumber>
    </recommendedName>
    <alternativeName>
        <fullName>Aminoacylproline aminopeptidase</fullName>
    </alternativeName>
    <alternativeName>
        <fullName>Prolidase</fullName>
    </alternativeName>
</protein>
<comment type="function">
    <text evidence="1">Catalyzes the removal of a penultimate prolyl residue from the N-termini of peptides.</text>
</comment>
<comment type="catalytic activity">
    <reaction>
        <text>Release of any N-terminal amino acid, including proline, that is linked to proline, even from a dipeptide or tripeptide.</text>
        <dbReference type="EC" id="3.4.11.9"/>
    </reaction>
</comment>
<comment type="cofactor">
    <cofactor evidence="1">
        <name>Mn(2+)</name>
        <dbReference type="ChEBI" id="CHEBI:29035"/>
    </cofactor>
    <text evidence="1">Binds 2 manganese ions per subunit.</text>
</comment>
<comment type="similarity">
    <text evidence="2">Belongs to the peptidase M24B family.</text>
</comment>
<evidence type="ECO:0000250" key="1"/>
<evidence type="ECO:0000305" key="2"/>
<organism>
    <name type="scientific">Arthroderma otae (strain ATCC MYA-4605 / CBS 113480)</name>
    <name type="common">Microsporum canis</name>
    <dbReference type="NCBI Taxonomy" id="554155"/>
    <lineage>
        <taxon>Eukaryota</taxon>
        <taxon>Fungi</taxon>
        <taxon>Dikarya</taxon>
        <taxon>Ascomycota</taxon>
        <taxon>Pezizomycotina</taxon>
        <taxon>Eurotiomycetes</taxon>
        <taxon>Eurotiomycetidae</taxon>
        <taxon>Onygenales</taxon>
        <taxon>Arthrodermataceae</taxon>
        <taxon>Microsporum</taxon>
    </lineage>
</organism>
<accession>C5FUV0</accession>
<sequence>MTSYSISVSVKGTNINKYPGKQHARRVAARLAKQKGLIYLPGQQTVLSEDSDQARPFKQRRYFFYVTGVVEPDCHVTYDIAEDKLTLYVPDFDFKRTIWTGPTLGKDDAKQRYDVDAVEYYSSLEGDVQRWAQGNPSTPIYILHPDQKPVTPLTVAYLYESKSLQHAMDACRVIKDEHESEAQIAGLFIDVCLSLRSRGTAYQTIAASGPNGATLHYTRNNEPLAGRQMVVLDAGAEWDCYASDVTRSFPIPSSVSGKENSGKGDWPSREAEEVYAIVQRMQEESISRVREGAMFFSIHQHAHSIALDELLRLGILRIPHGSSKADLVKAEATALFFPHGLGHHLGLEVHDVAPDSGTVPVTSSSSSSSSRVTAVTAQCQDGLMSVTEHRPPCTLSAPPLAAGMVITVEPGIYFNRLAIDQARAERDKPGSKGRFVDFDVVERYMAVGGVRIEDDVLVTKDGSRNLTDAPKGQDMLDMIYDRC</sequence>
<dbReference type="EC" id="3.4.11.9"/>
<dbReference type="EMBL" id="DS995706">
    <property type="protein sequence ID" value="EEQ33684.1"/>
    <property type="molecule type" value="Genomic_DNA"/>
</dbReference>
<dbReference type="RefSeq" id="XP_002844539.1">
    <property type="nucleotide sequence ID" value="XM_002844493.1"/>
</dbReference>
<dbReference type="SMR" id="C5FUV0"/>
<dbReference type="STRING" id="554155.C5FUV0"/>
<dbReference type="GeneID" id="9222311"/>
<dbReference type="VEuPathDB" id="FungiDB:MCYG_06503"/>
<dbReference type="eggNOG" id="KOG2737">
    <property type="taxonomic scope" value="Eukaryota"/>
</dbReference>
<dbReference type="HOGENOM" id="CLU_017266_1_2_1"/>
<dbReference type="OMA" id="YELRMIR"/>
<dbReference type="OrthoDB" id="10261878at2759"/>
<dbReference type="Proteomes" id="UP000002035">
    <property type="component" value="Unassembled WGS sequence"/>
</dbReference>
<dbReference type="GO" id="GO:0030145">
    <property type="term" value="F:manganese ion binding"/>
    <property type="evidence" value="ECO:0007669"/>
    <property type="project" value="InterPro"/>
</dbReference>
<dbReference type="GO" id="GO:0070006">
    <property type="term" value="F:metalloaminopeptidase activity"/>
    <property type="evidence" value="ECO:0007669"/>
    <property type="project" value="InterPro"/>
</dbReference>
<dbReference type="GO" id="GO:0006508">
    <property type="term" value="P:proteolysis"/>
    <property type="evidence" value="ECO:0007669"/>
    <property type="project" value="UniProtKB-KW"/>
</dbReference>
<dbReference type="Gene3D" id="3.90.230.10">
    <property type="entry name" value="Creatinase/methionine aminopeptidase superfamily"/>
    <property type="match status" value="1"/>
</dbReference>
<dbReference type="InterPro" id="IPR007865">
    <property type="entry name" value="Aminopep_P_N"/>
</dbReference>
<dbReference type="InterPro" id="IPR029149">
    <property type="entry name" value="Creatin/AminoP/Spt16_N"/>
</dbReference>
<dbReference type="InterPro" id="IPR036005">
    <property type="entry name" value="Creatinase/aminopeptidase-like"/>
</dbReference>
<dbReference type="InterPro" id="IPR000994">
    <property type="entry name" value="Pept_M24"/>
</dbReference>
<dbReference type="InterPro" id="IPR001131">
    <property type="entry name" value="Peptidase_M24B_aminopep-P_CS"/>
</dbReference>
<dbReference type="InterPro" id="IPR052433">
    <property type="entry name" value="X-Pro_dipept-like"/>
</dbReference>
<dbReference type="PANTHER" id="PTHR43226">
    <property type="entry name" value="XAA-PRO AMINOPEPTIDASE 3"/>
    <property type="match status" value="1"/>
</dbReference>
<dbReference type="PANTHER" id="PTHR43226:SF3">
    <property type="entry name" value="XAA-PRO AMINOPEPTIDASE AN0832-RELATED"/>
    <property type="match status" value="1"/>
</dbReference>
<dbReference type="Pfam" id="PF05195">
    <property type="entry name" value="AMP_N"/>
    <property type="match status" value="1"/>
</dbReference>
<dbReference type="Pfam" id="PF00557">
    <property type="entry name" value="Peptidase_M24"/>
    <property type="match status" value="1"/>
</dbReference>
<dbReference type="SMART" id="SM01011">
    <property type="entry name" value="AMP_N"/>
    <property type="match status" value="1"/>
</dbReference>
<dbReference type="SUPFAM" id="SSF55920">
    <property type="entry name" value="Creatinase/aminopeptidase"/>
    <property type="match status" value="1"/>
</dbReference>
<dbReference type="SUPFAM" id="SSF53092">
    <property type="entry name" value="Creatinase/prolidase N-terminal domain"/>
    <property type="match status" value="1"/>
</dbReference>
<dbReference type="PROSITE" id="PS00491">
    <property type="entry name" value="PROLINE_PEPTIDASE"/>
    <property type="match status" value="1"/>
</dbReference>
<name>AMPP2_ARTOC</name>
<proteinExistence type="inferred from homology"/>
<feature type="chain" id="PRO_0000411822" description="Probable Xaa-Pro aminopeptidase MCYG_06503">
    <location>
        <begin position="1"/>
        <end position="483"/>
    </location>
</feature>
<feature type="binding site" evidence="1">
    <location>
        <position position="233"/>
    </location>
    <ligand>
        <name>Mn(2+)</name>
        <dbReference type="ChEBI" id="CHEBI:29035"/>
        <label>2</label>
    </ligand>
</feature>
<feature type="binding site" evidence="1">
    <location>
        <position position="244"/>
    </location>
    <ligand>
        <name>Mn(2+)</name>
        <dbReference type="ChEBI" id="CHEBI:29035"/>
        <label>1</label>
    </ligand>
</feature>
<feature type="binding site" evidence="1">
    <location>
        <position position="244"/>
    </location>
    <ligand>
        <name>Mn(2+)</name>
        <dbReference type="ChEBI" id="CHEBI:29035"/>
        <label>2</label>
    </ligand>
</feature>
<feature type="binding site" evidence="1">
    <location>
        <position position="409"/>
    </location>
    <ligand>
        <name>Mn(2+)</name>
        <dbReference type="ChEBI" id="CHEBI:29035"/>
        <label>1</label>
    </ligand>
</feature>
<feature type="binding site" evidence="1">
    <location>
        <position position="453"/>
    </location>
    <ligand>
        <name>Mn(2+)</name>
        <dbReference type="ChEBI" id="CHEBI:29035"/>
        <label>1</label>
    </ligand>
</feature>
<feature type="binding site" evidence="1">
    <location>
        <position position="453"/>
    </location>
    <ligand>
        <name>Mn(2+)</name>
        <dbReference type="ChEBI" id="CHEBI:29035"/>
        <label>2</label>
    </ligand>
</feature>